<proteinExistence type="evidence at protein level"/>
<dbReference type="EC" id="6.3.4.13" evidence="2"/>
<dbReference type="EMBL" id="BA000018">
    <property type="protein sequence ID" value="BAB42171.1"/>
    <property type="status" value="ALT_INIT"/>
    <property type="molecule type" value="Genomic_DNA"/>
</dbReference>
<dbReference type="PIR" id="H89876">
    <property type="entry name" value="H89876"/>
</dbReference>
<dbReference type="RefSeq" id="WP_001101899.1">
    <property type="nucleotide sequence ID" value="NC_002745.2"/>
</dbReference>
<dbReference type="SMR" id="P65896"/>
<dbReference type="EnsemblBacteria" id="BAB42171">
    <property type="protein sequence ID" value="BAB42171"/>
    <property type="gene ID" value="BAB42171"/>
</dbReference>
<dbReference type="KEGG" id="sau:SA0926"/>
<dbReference type="HOGENOM" id="CLU_027420_3_1_9"/>
<dbReference type="UniPathway" id="UPA00074">
    <property type="reaction ID" value="UER00125"/>
</dbReference>
<dbReference type="GO" id="GO:0005524">
    <property type="term" value="F:ATP binding"/>
    <property type="evidence" value="ECO:0007669"/>
    <property type="project" value="UniProtKB-KW"/>
</dbReference>
<dbReference type="GO" id="GO:0046872">
    <property type="term" value="F:metal ion binding"/>
    <property type="evidence" value="ECO:0007669"/>
    <property type="project" value="UniProtKB-KW"/>
</dbReference>
<dbReference type="GO" id="GO:0004637">
    <property type="term" value="F:phosphoribosylamine-glycine ligase activity"/>
    <property type="evidence" value="ECO:0007669"/>
    <property type="project" value="UniProtKB-UniRule"/>
</dbReference>
<dbReference type="GO" id="GO:0006189">
    <property type="term" value="P:'de novo' IMP biosynthetic process"/>
    <property type="evidence" value="ECO:0007669"/>
    <property type="project" value="UniProtKB-UniRule"/>
</dbReference>
<dbReference type="GO" id="GO:0009113">
    <property type="term" value="P:purine nucleobase biosynthetic process"/>
    <property type="evidence" value="ECO:0007669"/>
    <property type="project" value="InterPro"/>
</dbReference>
<dbReference type="FunFam" id="3.40.50.20:FF:000006">
    <property type="entry name" value="Phosphoribosylamine--glycine ligase, chloroplastic"/>
    <property type="match status" value="1"/>
</dbReference>
<dbReference type="Gene3D" id="3.40.50.20">
    <property type="match status" value="1"/>
</dbReference>
<dbReference type="Gene3D" id="3.30.1490.20">
    <property type="entry name" value="ATP-grasp fold, A domain"/>
    <property type="match status" value="1"/>
</dbReference>
<dbReference type="Gene3D" id="3.30.470.20">
    <property type="entry name" value="ATP-grasp fold, B domain"/>
    <property type="match status" value="1"/>
</dbReference>
<dbReference type="Gene3D" id="3.90.600.10">
    <property type="entry name" value="Phosphoribosylglycinamide synthetase, C-terminal domain"/>
    <property type="match status" value="1"/>
</dbReference>
<dbReference type="HAMAP" id="MF_00138">
    <property type="entry name" value="GARS"/>
    <property type="match status" value="1"/>
</dbReference>
<dbReference type="InterPro" id="IPR011761">
    <property type="entry name" value="ATP-grasp"/>
</dbReference>
<dbReference type="InterPro" id="IPR013815">
    <property type="entry name" value="ATP_grasp_subdomain_1"/>
</dbReference>
<dbReference type="InterPro" id="IPR016185">
    <property type="entry name" value="PreATP-grasp_dom_sf"/>
</dbReference>
<dbReference type="InterPro" id="IPR020561">
    <property type="entry name" value="PRibGlycinamid_synth_ATP-grasp"/>
</dbReference>
<dbReference type="InterPro" id="IPR000115">
    <property type="entry name" value="PRibGlycinamide_synth"/>
</dbReference>
<dbReference type="InterPro" id="IPR020560">
    <property type="entry name" value="PRibGlycinamide_synth_C-dom"/>
</dbReference>
<dbReference type="InterPro" id="IPR037123">
    <property type="entry name" value="PRibGlycinamide_synth_C_sf"/>
</dbReference>
<dbReference type="InterPro" id="IPR020559">
    <property type="entry name" value="PRibGlycinamide_synth_CS"/>
</dbReference>
<dbReference type="InterPro" id="IPR020562">
    <property type="entry name" value="PRibGlycinamide_synth_N"/>
</dbReference>
<dbReference type="InterPro" id="IPR011054">
    <property type="entry name" value="Rudment_hybrid_motif"/>
</dbReference>
<dbReference type="NCBIfam" id="TIGR00877">
    <property type="entry name" value="purD"/>
    <property type="match status" value="1"/>
</dbReference>
<dbReference type="PANTHER" id="PTHR43472">
    <property type="entry name" value="PHOSPHORIBOSYLAMINE--GLYCINE LIGASE"/>
    <property type="match status" value="1"/>
</dbReference>
<dbReference type="PANTHER" id="PTHR43472:SF1">
    <property type="entry name" value="PHOSPHORIBOSYLAMINE--GLYCINE LIGASE, CHLOROPLASTIC"/>
    <property type="match status" value="1"/>
</dbReference>
<dbReference type="Pfam" id="PF01071">
    <property type="entry name" value="GARS_A"/>
    <property type="match status" value="1"/>
</dbReference>
<dbReference type="Pfam" id="PF02843">
    <property type="entry name" value="GARS_C"/>
    <property type="match status" value="1"/>
</dbReference>
<dbReference type="Pfam" id="PF02844">
    <property type="entry name" value="GARS_N"/>
    <property type="match status" value="1"/>
</dbReference>
<dbReference type="SMART" id="SM01209">
    <property type="entry name" value="GARS_A"/>
    <property type="match status" value="1"/>
</dbReference>
<dbReference type="SMART" id="SM01210">
    <property type="entry name" value="GARS_C"/>
    <property type="match status" value="1"/>
</dbReference>
<dbReference type="SUPFAM" id="SSF56059">
    <property type="entry name" value="Glutathione synthetase ATP-binding domain-like"/>
    <property type="match status" value="1"/>
</dbReference>
<dbReference type="SUPFAM" id="SSF52440">
    <property type="entry name" value="PreATP-grasp domain"/>
    <property type="match status" value="1"/>
</dbReference>
<dbReference type="SUPFAM" id="SSF51246">
    <property type="entry name" value="Rudiment single hybrid motif"/>
    <property type="match status" value="1"/>
</dbReference>
<dbReference type="PROSITE" id="PS50975">
    <property type="entry name" value="ATP_GRASP"/>
    <property type="match status" value="1"/>
</dbReference>
<dbReference type="PROSITE" id="PS00184">
    <property type="entry name" value="GARS"/>
    <property type="match status" value="1"/>
</dbReference>
<feature type="chain" id="PRO_0000151480" description="Phosphoribosylamine--glycine ligase">
    <location>
        <begin position="1"/>
        <end position="415"/>
    </location>
</feature>
<feature type="domain" description="ATP-grasp" evidence="2">
    <location>
        <begin position="108"/>
        <end position="311"/>
    </location>
</feature>
<feature type="binding site" evidence="2">
    <location>
        <begin position="134"/>
        <end position="191"/>
    </location>
    <ligand>
        <name>ATP</name>
        <dbReference type="ChEBI" id="CHEBI:30616"/>
    </ligand>
</feature>
<feature type="binding site" evidence="2">
    <location>
        <position position="281"/>
    </location>
    <ligand>
        <name>Mg(2+)</name>
        <dbReference type="ChEBI" id="CHEBI:18420"/>
    </ligand>
</feature>
<feature type="binding site" evidence="2">
    <location>
        <position position="283"/>
    </location>
    <ligand>
        <name>Mg(2+)</name>
        <dbReference type="ChEBI" id="CHEBI:18420"/>
    </ligand>
</feature>
<accession>P65896</accession>
<accession>Q99V23</accession>
<comment type="catalytic activity">
    <reaction evidence="2">
        <text>5-phospho-beta-D-ribosylamine + glycine + ATP = N(1)-(5-phospho-beta-D-ribosyl)glycinamide + ADP + phosphate + H(+)</text>
        <dbReference type="Rhea" id="RHEA:17453"/>
        <dbReference type="ChEBI" id="CHEBI:15378"/>
        <dbReference type="ChEBI" id="CHEBI:30616"/>
        <dbReference type="ChEBI" id="CHEBI:43474"/>
        <dbReference type="ChEBI" id="CHEBI:57305"/>
        <dbReference type="ChEBI" id="CHEBI:58681"/>
        <dbReference type="ChEBI" id="CHEBI:143788"/>
        <dbReference type="ChEBI" id="CHEBI:456216"/>
        <dbReference type="EC" id="6.3.4.13"/>
    </reaction>
</comment>
<comment type="cofactor">
    <cofactor evidence="1">
        <name>Mg(2+)</name>
        <dbReference type="ChEBI" id="CHEBI:18420"/>
    </cofactor>
    <cofactor evidence="1">
        <name>Mn(2+)</name>
        <dbReference type="ChEBI" id="CHEBI:29035"/>
    </cofactor>
    <text evidence="1">Binds 1 Mg(2+) or Mn(2+) ion per subunit.</text>
</comment>
<comment type="pathway">
    <text evidence="2">Purine metabolism; IMP biosynthesis via de novo pathway; N(1)-(5-phospho-D-ribosyl)glycinamide from 5-phospho-alpha-D-ribose 1-diphosphate: step 2/2.</text>
</comment>
<comment type="similarity">
    <text evidence="2">Belongs to the GARS family.</text>
</comment>
<comment type="sequence caution" evidence="3">
    <conflict type="erroneous initiation">
        <sequence resource="EMBL-CDS" id="BAB42171"/>
    </conflict>
</comment>
<organism>
    <name type="scientific">Staphylococcus aureus (strain N315)</name>
    <dbReference type="NCBI Taxonomy" id="158879"/>
    <lineage>
        <taxon>Bacteria</taxon>
        <taxon>Bacillati</taxon>
        <taxon>Bacillota</taxon>
        <taxon>Bacilli</taxon>
        <taxon>Bacillales</taxon>
        <taxon>Staphylococcaceae</taxon>
        <taxon>Staphylococcus</taxon>
    </lineage>
</organism>
<reference key="1">
    <citation type="journal article" date="2001" name="Lancet">
        <title>Whole genome sequencing of meticillin-resistant Staphylococcus aureus.</title>
        <authorList>
            <person name="Kuroda M."/>
            <person name="Ohta T."/>
            <person name="Uchiyama I."/>
            <person name="Baba T."/>
            <person name="Yuzawa H."/>
            <person name="Kobayashi I."/>
            <person name="Cui L."/>
            <person name="Oguchi A."/>
            <person name="Aoki K."/>
            <person name="Nagai Y."/>
            <person name="Lian J.-Q."/>
            <person name="Ito T."/>
            <person name="Kanamori M."/>
            <person name="Matsumaru H."/>
            <person name="Maruyama A."/>
            <person name="Murakami H."/>
            <person name="Hosoyama A."/>
            <person name="Mizutani-Ui Y."/>
            <person name="Takahashi N.K."/>
            <person name="Sawano T."/>
            <person name="Inoue R."/>
            <person name="Kaito C."/>
            <person name="Sekimizu K."/>
            <person name="Hirakawa H."/>
            <person name="Kuhara S."/>
            <person name="Goto S."/>
            <person name="Yabuzaki J."/>
            <person name="Kanehisa M."/>
            <person name="Yamashita A."/>
            <person name="Oshima K."/>
            <person name="Furuya K."/>
            <person name="Yoshino C."/>
            <person name="Shiba T."/>
            <person name="Hattori M."/>
            <person name="Ogasawara N."/>
            <person name="Hayashi H."/>
            <person name="Hiramatsu K."/>
        </authorList>
    </citation>
    <scope>NUCLEOTIDE SEQUENCE [LARGE SCALE GENOMIC DNA]</scope>
    <source>
        <strain>N315</strain>
    </source>
</reference>
<reference key="2">
    <citation type="submission" date="2007-10" db="UniProtKB">
        <title>Shotgun proteomic analysis of total and membrane protein extracts of S. aureus strain N315.</title>
        <authorList>
            <person name="Vaezzadeh A.R."/>
            <person name="Deshusses J."/>
            <person name="Lescuyer P."/>
            <person name="Hochstrasser D.F."/>
        </authorList>
    </citation>
    <scope>IDENTIFICATION BY MASS SPECTROMETRY [LARGE SCALE ANALYSIS]</scope>
    <source>
        <strain>N315</strain>
    </source>
</reference>
<gene>
    <name evidence="2" type="primary">purD</name>
    <name type="ordered locus">SA0926</name>
</gene>
<evidence type="ECO:0000250" key="1"/>
<evidence type="ECO:0000255" key="2">
    <source>
        <dbReference type="HAMAP-Rule" id="MF_00138"/>
    </source>
</evidence>
<evidence type="ECO:0000305" key="3"/>
<sequence length="415" mass="45836">MNVLVIGAGGREHALAYKLNQSNLVKQEFVIPGNEAMTPIAEVHTEISESNHQGILDFAKQQNVDWVVIGPEQPLIDGLADILRANGFKVFGPNKQAAQIEGSKLFAKKIMKKYNIPTADYKEVERKKDALTYIENCELPVVVKKDGLAAGKGVIIADTIEAARSAIEIMYGDEEEGTVVFETFLEGEEFSLMTFVNGDLAVPFDCIAQDHKRAFDHDEGPNTGGMGAYCPVPHISDDVLKLTNETIAQPIAKAMLNEGYQFFGVLYIGAILTKDGPKVIEFNARFGDPEAQVLLSRMESDLMQHIIDLDEGKRTEFKWKNESIVGVMLASKGYPDAYEKGHKVSGFDLNENYFVSGLKKQGDTFVTSGGRVILAIGKGDNVQDAQRDAYEKVSQIQSDHLFYRHDIANKALQLK</sequence>
<keyword id="KW-0067">ATP-binding</keyword>
<keyword id="KW-0436">Ligase</keyword>
<keyword id="KW-0460">Magnesium</keyword>
<keyword id="KW-0464">Manganese</keyword>
<keyword id="KW-0479">Metal-binding</keyword>
<keyword id="KW-0547">Nucleotide-binding</keyword>
<keyword id="KW-0658">Purine biosynthesis</keyword>
<name>PUR2_STAAN</name>
<protein>
    <recommendedName>
        <fullName evidence="2">Phosphoribosylamine--glycine ligase</fullName>
        <ecNumber evidence="2">6.3.4.13</ecNumber>
    </recommendedName>
    <alternativeName>
        <fullName evidence="2">GARS</fullName>
    </alternativeName>
    <alternativeName>
        <fullName evidence="2">Glycinamide ribonucleotide synthetase</fullName>
    </alternativeName>
    <alternativeName>
        <fullName evidence="2">Phosphoribosylglycinamide synthetase</fullName>
    </alternativeName>
</protein>